<keyword id="KW-0521">NADP</keyword>
<keyword id="KW-0560">Oxidoreductase</keyword>
<keyword id="KW-0627">Porphyrin biosynthesis</keyword>
<keyword id="KW-1185">Reference proteome</keyword>
<dbReference type="EC" id="1.2.1.70" evidence="1"/>
<dbReference type="EMBL" id="CU207211">
    <property type="protein sequence ID" value="CAL60420.1"/>
    <property type="molecule type" value="Genomic_DNA"/>
</dbReference>
<dbReference type="SMR" id="A4G1N3"/>
<dbReference type="STRING" id="204773.HEAR0186"/>
<dbReference type="KEGG" id="har:HEAR0186"/>
<dbReference type="eggNOG" id="COG0373">
    <property type="taxonomic scope" value="Bacteria"/>
</dbReference>
<dbReference type="HOGENOM" id="CLU_035113_2_2_4"/>
<dbReference type="OrthoDB" id="110209at2"/>
<dbReference type="UniPathway" id="UPA00251">
    <property type="reaction ID" value="UER00316"/>
</dbReference>
<dbReference type="Proteomes" id="UP000006697">
    <property type="component" value="Chromosome"/>
</dbReference>
<dbReference type="GO" id="GO:0008883">
    <property type="term" value="F:glutamyl-tRNA reductase activity"/>
    <property type="evidence" value="ECO:0007669"/>
    <property type="project" value="UniProtKB-UniRule"/>
</dbReference>
<dbReference type="GO" id="GO:0050661">
    <property type="term" value="F:NADP binding"/>
    <property type="evidence" value="ECO:0007669"/>
    <property type="project" value="InterPro"/>
</dbReference>
<dbReference type="GO" id="GO:0019353">
    <property type="term" value="P:protoporphyrinogen IX biosynthetic process from glutamate"/>
    <property type="evidence" value="ECO:0007669"/>
    <property type="project" value="TreeGrafter"/>
</dbReference>
<dbReference type="CDD" id="cd05213">
    <property type="entry name" value="NAD_bind_Glutamyl_tRNA_reduct"/>
    <property type="match status" value="1"/>
</dbReference>
<dbReference type="FunFam" id="3.30.460.30:FF:000001">
    <property type="entry name" value="Glutamyl-tRNA reductase"/>
    <property type="match status" value="1"/>
</dbReference>
<dbReference type="FunFam" id="3.40.50.720:FF:000031">
    <property type="entry name" value="Glutamyl-tRNA reductase"/>
    <property type="match status" value="1"/>
</dbReference>
<dbReference type="Gene3D" id="3.30.460.30">
    <property type="entry name" value="Glutamyl-tRNA reductase, N-terminal domain"/>
    <property type="match status" value="1"/>
</dbReference>
<dbReference type="Gene3D" id="3.40.50.720">
    <property type="entry name" value="NAD(P)-binding Rossmann-like Domain"/>
    <property type="match status" value="1"/>
</dbReference>
<dbReference type="HAMAP" id="MF_00087">
    <property type="entry name" value="Glu_tRNA_reductase"/>
    <property type="match status" value="1"/>
</dbReference>
<dbReference type="InterPro" id="IPR000343">
    <property type="entry name" value="4pyrrol_synth_GluRdtase"/>
</dbReference>
<dbReference type="InterPro" id="IPR015896">
    <property type="entry name" value="4pyrrol_synth_GluRdtase_dimer"/>
</dbReference>
<dbReference type="InterPro" id="IPR015895">
    <property type="entry name" value="4pyrrol_synth_GluRdtase_N"/>
</dbReference>
<dbReference type="InterPro" id="IPR018214">
    <property type="entry name" value="GluRdtase_CS"/>
</dbReference>
<dbReference type="InterPro" id="IPR036453">
    <property type="entry name" value="GluRdtase_dimer_dom_sf"/>
</dbReference>
<dbReference type="InterPro" id="IPR036343">
    <property type="entry name" value="GluRdtase_N_sf"/>
</dbReference>
<dbReference type="InterPro" id="IPR036291">
    <property type="entry name" value="NAD(P)-bd_dom_sf"/>
</dbReference>
<dbReference type="InterPro" id="IPR006151">
    <property type="entry name" value="Shikm_DH/Glu-tRNA_Rdtase"/>
</dbReference>
<dbReference type="NCBIfam" id="TIGR01035">
    <property type="entry name" value="hemA"/>
    <property type="match status" value="1"/>
</dbReference>
<dbReference type="PANTHER" id="PTHR43013">
    <property type="entry name" value="GLUTAMYL-TRNA REDUCTASE"/>
    <property type="match status" value="1"/>
</dbReference>
<dbReference type="PANTHER" id="PTHR43013:SF1">
    <property type="entry name" value="GLUTAMYL-TRNA REDUCTASE"/>
    <property type="match status" value="1"/>
</dbReference>
<dbReference type="Pfam" id="PF00745">
    <property type="entry name" value="GlutR_dimer"/>
    <property type="match status" value="1"/>
</dbReference>
<dbReference type="Pfam" id="PF05201">
    <property type="entry name" value="GlutR_N"/>
    <property type="match status" value="1"/>
</dbReference>
<dbReference type="Pfam" id="PF01488">
    <property type="entry name" value="Shikimate_DH"/>
    <property type="match status" value="1"/>
</dbReference>
<dbReference type="PIRSF" id="PIRSF000445">
    <property type="entry name" value="4pyrrol_synth_GluRdtase"/>
    <property type="match status" value="1"/>
</dbReference>
<dbReference type="SUPFAM" id="SSF69742">
    <property type="entry name" value="Glutamyl tRNA-reductase catalytic, N-terminal domain"/>
    <property type="match status" value="1"/>
</dbReference>
<dbReference type="SUPFAM" id="SSF69075">
    <property type="entry name" value="Glutamyl tRNA-reductase dimerization domain"/>
    <property type="match status" value="1"/>
</dbReference>
<dbReference type="SUPFAM" id="SSF51735">
    <property type="entry name" value="NAD(P)-binding Rossmann-fold domains"/>
    <property type="match status" value="1"/>
</dbReference>
<dbReference type="PROSITE" id="PS00747">
    <property type="entry name" value="GLUTR"/>
    <property type="match status" value="1"/>
</dbReference>
<accession>A4G1N3</accession>
<reference key="1">
    <citation type="journal article" date="2007" name="PLoS Genet.">
        <title>A tale of two oxidation states: bacterial colonization of arsenic-rich environments.</title>
        <authorList>
            <person name="Muller D."/>
            <person name="Medigue C."/>
            <person name="Koechler S."/>
            <person name="Barbe V."/>
            <person name="Barakat M."/>
            <person name="Talla E."/>
            <person name="Bonnefoy V."/>
            <person name="Krin E."/>
            <person name="Arsene-Ploetze F."/>
            <person name="Carapito C."/>
            <person name="Chandler M."/>
            <person name="Cournoyer B."/>
            <person name="Cruveiller S."/>
            <person name="Dossat C."/>
            <person name="Duval S."/>
            <person name="Heymann M."/>
            <person name="Leize E."/>
            <person name="Lieutaud A."/>
            <person name="Lievremont D."/>
            <person name="Makita Y."/>
            <person name="Mangenot S."/>
            <person name="Nitschke W."/>
            <person name="Ortet P."/>
            <person name="Perdrial N."/>
            <person name="Schoepp B."/>
            <person name="Siguier P."/>
            <person name="Simeonova D.D."/>
            <person name="Rouy Z."/>
            <person name="Segurens B."/>
            <person name="Turlin E."/>
            <person name="Vallenet D."/>
            <person name="van Dorsselaer A."/>
            <person name="Weiss S."/>
            <person name="Weissenbach J."/>
            <person name="Lett M.-C."/>
            <person name="Danchin A."/>
            <person name="Bertin P.N."/>
        </authorList>
    </citation>
    <scope>NUCLEOTIDE SEQUENCE [LARGE SCALE GENOMIC DNA]</scope>
    <source>
        <strain>ULPAs1</strain>
    </source>
</reference>
<comment type="function">
    <text evidence="1">Catalyzes the NADPH-dependent reduction of glutamyl-tRNA(Glu) to glutamate 1-semialdehyde (GSA).</text>
</comment>
<comment type="catalytic activity">
    <reaction evidence="1">
        <text>(S)-4-amino-5-oxopentanoate + tRNA(Glu) + NADP(+) = L-glutamyl-tRNA(Glu) + NADPH + H(+)</text>
        <dbReference type="Rhea" id="RHEA:12344"/>
        <dbReference type="Rhea" id="RHEA-COMP:9663"/>
        <dbReference type="Rhea" id="RHEA-COMP:9680"/>
        <dbReference type="ChEBI" id="CHEBI:15378"/>
        <dbReference type="ChEBI" id="CHEBI:57501"/>
        <dbReference type="ChEBI" id="CHEBI:57783"/>
        <dbReference type="ChEBI" id="CHEBI:58349"/>
        <dbReference type="ChEBI" id="CHEBI:78442"/>
        <dbReference type="ChEBI" id="CHEBI:78520"/>
        <dbReference type="EC" id="1.2.1.70"/>
    </reaction>
</comment>
<comment type="pathway">
    <text evidence="1">Porphyrin-containing compound metabolism; protoporphyrin-IX biosynthesis; 5-aminolevulinate from L-glutamyl-tRNA(Glu): step 1/2.</text>
</comment>
<comment type="subunit">
    <text evidence="1">Homodimer.</text>
</comment>
<comment type="domain">
    <text evidence="1">Possesses an unusual extended V-shaped dimeric structure with each monomer consisting of three distinct domains arranged along a curved 'spinal' alpha-helix. The N-terminal catalytic domain specifically recognizes the glutamate moiety of the substrate. The second domain is the NADPH-binding domain, and the third C-terminal domain is responsible for dimerization.</text>
</comment>
<comment type="miscellaneous">
    <text evidence="1">During catalysis, the active site Cys acts as a nucleophile attacking the alpha-carbonyl group of tRNA-bound glutamate with the formation of a thioester intermediate between enzyme and glutamate, and the concomitant release of tRNA(Glu). The thioester intermediate is finally reduced by direct hydride transfer from NADPH, to form the product GSA.</text>
</comment>
<comment type="similarity">
    <text evidence="1">Belongs to the glutamyl-tRNA reductase family.</text>
</comment>
<sequence>MQLLAVGLNHTTAPVSLREKVAFPADQLGQAVASARVWYGRSDSKTYSDEAAILSTCNRTELYAASHQPGGVNEAIDLTAHFLADYHKLPYSELRPYLYALPQDNAVRHAFRVASGLDSMVLGEPQILGQMKDAVRQAEAAGGLGTYLHQMFQRTFAVAKEVRSNTEIGAHSVSMAAASVRLSQRIFDTISEQNVLFIGAGEMIELCATHFAAQNPKSLTIANRTLERGETLAHRFNGRAIRLADLPDQLASYDIVISSTASSLPIIGLGMVERAIKARRHKPMFMVDLAVPRDIETEIGRLDDVFLYTVDDLGTFVQTGLENRQAAVTQAEAIIETRVQSFMHWIDARAVVPVIQDLHESSEMMRMIELERARKLLAKGEDIDAVLEALSKGLTAKFLHGPQQALNNAQGDERTRLAALLPQLFRTKR</sequence>
<organism>
    <name type="scientific">Herminiimonas arsenicoxydans</name>
    <dbReference type="NCBI Taxonomy" id="204773"/>
    <lineage>
        <taxon>Bacteria</taxon>
        <taxon>Pseudomonadati</taxon>
        <taxon>Pseudomonadota</taxon>
        <taxon>Betaproteobacteria</taxon>
        <taxon>Burkholderiales</taxon>
        <taxon>Oxalobacteraceae</taxon>
        <taxon>Herminiimonas</taxon>
    </lineage>
</organism>
<evidence type="ECO:0000255" key="1">
    <source>
        <dbReference type="HAMAP-Rule" id="MF_00087"/>
    </source>
</evidence>
<name>HEM1_HERAR</name>
<protein>
    <recommendedName>
        <fullName evidence="1">Glutamyl-tRNA reductase</fullName>
        <shortName evidence="1">GluTR</shortName>
        <ecNumber evidence="1">1.2.1.70</ecNumber>
    </recommendedName>
</protein>
<gene>
    <name evidence="1" type="primary">hemA</name>
    <name type="ordered locus">HEAR0186</name>
</gene>
<proteinExistence type="inferred from homology"/>
<feature type="chain" id="PRO_0000335046" description="Glutamyl-tRNA reductase">
    <location>
        <begin position="1"/>
        <end position="429"/>
    </location>
</feature>
<feature type="active site" description="Nucleophile" evidence="1">
    <location>
        <position position="57"/>
    </location>
</feature>
<feature type="binding site" evidence="1">
    <location>
        <begin position="56"/>
        <end position="59"/>
    </location>
    <ligand>
        <name>substrate</name>
    </ligand>
</feature>
<feature type="binding site" evidence="1">
    <location>
        <position position="119"/>
    </location>
    <ligand>
        <name>substrate</name>
    </ligand>
</feature>
<feature type="binding site" evidence="1">
    <location>
        <begin position="124"/>
        <end position="126"/>
    </location>
    <ligand>
        <name>substrate</name>
    </ligand>
</feature>
<feature type="binding site" evidence="1">
    <location>
        <position position="130"/>
    </location>
    <ligand>
        <name>substrate</name>
    </ligand>
</feature>
<feature type="binding site" evidence="1">
    <location>
        <begin position="199"/>
        <end position="204"/>
    </location>
    <ligand>
        <name>NADP(+)</name>
        <dbReference type="ChEBI" id="CHEBI:58349"/>
    </ligand>
</feature>
<feature type="site" description="Important for activity" evidence="1">
    <location>
        <position position="109"/>
    </location>
</feature>